<protein>
    <recommendedName>
        <fullName evidence="1">Chromosome partition protein MukE</fullName>
    </recommendedName>
</protein>
<dbReference type="EMBL" id="FM178380">
    <property type="protein sequence ID" value="CAQ81482.1"/>
    <property type="molecule type" value="Genomic_DNA"/>
</dbReference>
<dbReference type="SMR" id="B6ERZ8"/>
<dbReference type="KEGG" id="vsa:VSAL_II0728"/>
<dbReference type="eggNOG" id="COG3095">
    <property type="taxonomic scope" value="Bacteria"/>
</dbReference>
<dbReference type="HOGENOM" id="CLU_1146408_0_0_6"/>
<dbReference type="Proteomes" id="UP000001730">
    <property type="component" value="Chromosome 2"/>
</dbReference>
<dbReference type="GO" id="GO:0005737">
    <property type="term" value="C:cytoplasm"/>
    <property type="evidence" value="ECO:0007669"/>
    <property type="project" value="UniProtKB-UniRule"/>
</dbReference>
<dbReference type="GO" id="GO:0009295">
    <property type="term" value="C:nucleoid"/>
    <property type="evidence" value="ECO:0007669"/>
    <property type="project" value="UniProtKB-SubCell"/>
</dbReference>
<dbReference type="GO" id="GO:0051301">
    <property type="term" value="P:cell division"/>
    <property type="evidence" value="ECO:0007669"/>
    <property type="project" value="UniProtKB-KW"/>
</dbReference>
<dbReference type="GO" id="GO:0030261">
    <property type="term" value="P:chromosome condensation"/>
    <property type="evidence" value="ECO:0007669"/>
    <property type="project" value="UniProtKB-KW"/>
</dbReference>
<dbReference type="GO" id="GO:0007059">
    <property type="term" value="P:chromosome segregation"/>
    <property type="evidence" value="ECO:0007669"/>
    <property type="project" value="UniProtKB-UniRule"/>
</dbReference>
<dbReference type="GO" id="GO:0006260">
    <property type="term" value="P:DNA replication"/>
    <property type="evidence" value="ECO:0007669"/>
    <property type="project" value="UniProtKB-UniRule"/>
</dbReference>
<dbReference type="Gene3D" id="1.10.10.2250">
    <property type="match status" value="1"/>
</dbReference>
<dbReference type="Gene3D" id="1.10.10.2260">
    <property type="entry name" value="MukE-like family, C-terminal domain"/>
    <property type="match status" value="1"/>
</dbReference>
<dbReference type="HAMAP" id="MF_01802">
    <property type="entry name" value="MukE"/>
    <property type="match status" value="1"/>
</dbReference>
<dbReference type="InterPro" id="IPR042037">
    <property type="entry name" value="MukE_C"/>
</dbReference>
<dbReference type="InterPro" id="IPR042038">
    <property type="entry name" value="MukE_N"/>
</dbReference>
<dbReference type="InterPro" id="IPR007385">
    <property type="entry name" value="Scp_MukE"/>
</dbReference>
<dbReference type="NCBIfam" id="NF003602">
    <property type="entry name" value="PRK05256.1"/>
    <property type="match status" value="1"/>
</dbReference>
<dbReference type="Pfam" id="PF04288">
    <property type="entry name" value="MukE"/>
    <property type="match status" value="1"/>
</dbReference>
<sequence>MPEKLAKAIANPLFPALDSLLRSGRHIASEDLDNHALLCEFEHELGMFYQRYHAELVKAPEGFFYLRPRSTSLIARSVLAEVDMLVGKVLCFLYLSPERLAHEGIFTNQELFDELLVLADEQKLMKLVTNRASGSDLDKEKLFDKVRTSLRRLKRLGMIIQVGEQGKFRISEAVFRFGADVRSNDDMKEAQLRLIRDGEAVVVHNEESSQSSFDLDENEKLSDISAEEQHELELEGDA</sequence>
<name>MUKE_ALISL</name>
<gene>
    <name evidence="1" type="primary">mukE</name>
    <name type="ordered locus">VSAL_II0728</name>
</gene>
<feature type="chain" id="PRO_1000187495" description="Chromosome partition protein MukE">
    <location>
        <begin position="1"/>
        <end position="238"/>
    </location>
</feature>
<feature type="region of interest" description="Disordered" evidence="2">
    <location>
        <begin position="206"/>
        <end position="238"/>
    </location>
</feature>
<feature type="compositionally biased region" description="Basic and acidic residues" evidence="2">
    <location>
        <begin position="218"/>
        <end position="238"/>
    </location>
</feature>
<accession>B6ERZ8</accession>
<organism>
    <name type="scientific">Aliivibrio salmonicida (strain LFI1238)</name>
    <name type="common">Vibrio salmonicida (strain LFI1238)</name>
    <dbReference type="NCBI Taxonomy" id="316275"/>
    <lineage>
        <taxon>Bacteria</taxon>
        <taxon>Pseudomonadati</taxon>
        <taxon>Pseudomonadota</taxon>
        <taxon>Gammaproteobacteria</taxon>
        <taxon>Vibrionales</taxon>
        <taxon>Vibrionaceae</taxon>
        <taxon>Aliivibrio</taxon>
    </lineage>
</organism>
<reference key="1">
    <citation type="journal article" date="2008" name="BMC Genomics">
        <title>The genome sequence of the fish pathogen Aliivibrio salmonicida strain LFI1238 shows extensive evidence of gene decay.</title>
        <authorList>
            <person name="Hjerde E."/>
            <person name="Lorentzen M.S."/>
            <person name="Holden M.T."/>
            <person name="Seeger K."/>
            <person name="Paulsen S."/>
            <person name="Bason N."/>
            <person name="Churcher C."/>
            <person name="Harris D."/>
            <person name="Norbertczak H."/>
            <person name="Quail M.A."/>
            <person name="Sanders S."/>
            <person name="Thurston S."/>
            <person name="Parkhill J."/>
            <person name="Willassen N.P."/>
            <person name="Thomson N.R."/>
        </authorList>
    </citation>
    <scope>NUCLEOTIDE SEQUENCE [LARGE SCALE GENOMIC DNA]</scope>
    <source>
        <strain>LFI1238</strain>
    </source>
</reference>
<keyword id="KW-0131">Cell cycle</keyword>
<keyword id="KW-0132">Cell division</keyword>
<keyword id="KW-0159">Chromosome partition</keyword>
<keyword id="KW-0963">Cytoplasm</keyword>
<keyword id="KW-0226">DNA condensation</keyword>
<proteinExistence type="inferred from homology"/>
<evidence type="ECO:0000255" key="1">
    <source>
        <dbReference type="HAMAP-Rule" id="MF_01802"/>
    </source>
</evidence>
<evidence type="ECO:0000256" key="2">
    <source>
        <dbReference type="SAM" id="MobiDB-lite"/>
    </source>
</evidence>
<comment type="function">
    <text evidence="1">Involved in chromosome condensation, segregation and cell cycle progression. May participate in facilitating chromosome segregation by condensation DNA from both sides of a centrally located replisome during cell division. Probably acts via its interaction with MukB and MukF.</text>
</comment>
<comment type="subunit">
    <text evidence="1">Interacts, and probably forms a ternary complex, with MukF and MukB. The complex formation is stimulated by calcium or magnesium.</text>
</comment>
<comment type="subcellular location">
    <subcellularLocation>
        <location evidence="1">Cytoplasm</location>
        <location evidence="1">Nucleoid</location>
    </subcellularLocation>
    <text evidence="1">Restricted to the nucleoid region.</text>
</comment>
<comment type="similarity">
    <text evidence="1">Belongs to the MukE family.</text>
</comment>